<organism>
    <name type="scientific">Oryza sativa subsp. japonica</name>
    <name type="common">Rice</name>
    <dbReference type="NCBI Taxonomy" id="39947"/>
    <lineage>
        <taxon>Eukaryota</taxon>
        <taxon>Viridiplantae</taxon>
        <taxon>Streptophyta</taxon>
        <taxon>Embryophyta</taxon>
        <taxon>Tracheophyta</taxon>
        <taxon>Spermatophyta</taxon>
        <taxon>Magnoliopsida</taxon>
        <taxon>Liliopsida</taxon>
        <taxon>Poales</taxon>
        <taxon>Poaceae</taxon>
        <taxon>BOP clade</taxon>
        <taxon>Oryzoideae</taxon>
        <taxon>Oryzeae</taxon>
        <taxon>Oryzinae</taxon>
        <taxon>Oryza</taxon>
        <taxon>Oryza sativa</taxon>
    </lineage>
</organism>
<feature type="initiator methionine" description="Removed" evidence="1">
    <location>
        <position position="1"/>
    </location>
</feature>
<feature type="chain" id="PRO_0000294193" description="Histone H2B.9">
    <location>
        <begin position="2"/>
        <end position="152"/>
    </location>
</feature>
<feature type="region of interest" description="Disordered" evidence="2">
    <location>
        <begin position="1"/>
        <end position="59"/>
    </location>
</feature>
<feature type="compositionally biased region" description="Basic and acidic residues" evidence="2">
    <location>
        <begin position="1"/>
        <end position="16"/>
    </location>
</feature>
<feature type="compositionally biased region" description="Basic and acidic residues" evidence="2">
    <location>
        <begin position="34"/>
        <end position="52"/>
    </location>
</feature>
<feature type="modified residue" description="N6-acetyllysine" evidence="1">
    <location>
        <position position="7"/>
    </location>
</feature>
<feature type="modified residue" description="N6-acetyllysine" evidence="1">
    <location>
        <position position="35"/>
    </location>
</feature>
<feature type="cross-link" description="Glycyl lysine isopeptide (Lys-Gly) (interchain with G-Cter in ubiquitin)" evidence="1">
    <location>
        <position position="148"/>
    </location>
</feature>
<evidence type="ECO:0000250" key="1"/>
<evidence type="ECO:0000256" key="2">
    <source>
        <dbReference type="SAM" id="MobiDB-lite"/>
    </source>
</evidence>
<evidence type="ECO:0000305" key="3"/>
<evidence type="ECO:0000312" key="4">
    <source>
        <dbReference type="EMBL" id="EEE64777.1"/>
    </source>
</evidence>
<keyword id="KW-0007">Acetylation</keyword>
<keyword id="KW-0158">Chromosome</keyword>
<keyword id="KW-0238">DNA-binding</keyword>
<keyword id="KW-1017">Isopeptide bond</keyword>
<keyword id="KW-0544">Nucleosome core</keyword>
<keyword id="KW-0539">Nucleus</keyword>
<keyword id="KW-1185">Reference proteome</keyword>
<keyword id="KW-0832">Ubl conjugation</keyword>
<sequence>MAPKAEKKPAAKKPAEEEPAAEKAPAAGKKPKAEKRLPAGKGEKGGAGEGKKAGRKKGKKSVETYKIYIFKVLKQVHPDIGISSKAMSIMNSFINDIFEKLAAEAAKLARYNKKPTITSREIQTSVRLVLPGELAKHAVSEGTKAVTKFTSA</sequence>
<gene>
    <name type="primary">H2B.9</name>
    <name type="ordered locus">Os05g0574300</name>
    <name type="ordered locus">LOC_Os05g49860</name>
    <name type="ORF">OJ1268_B08.6</name>
    <name type="ORF">OJ1735_C10.24</name>
    <name type="ORF">OsJ_018845</name>
    <name evidence="4" type="ORF">OsJ_19633</name>
</gene>
<accession>Q6F362</accession>
<accession>B9FIG2</accession>
<accession>Q0DFS1</accession>
<name>H2B9_ORYSJ</name>
<protein>
    <recommendedName>
        <fullName>Histone H2B.9</fullName>
    </recommendedName>
</protein>
<proteinExistence type="inferred from homology"/>
<dbReference type="EMBL" id="AC098832">
    <property type="protein sequence ID" value="AAT69583.1"/>
    <property type="molecule type" value="Genomic_DNA"/>
</dbReference>
<dbReference type="EMBL" id="AC104284">
    <property type="protein sequence ID" value="AAU44113.1"/>
    <property type="molecule type" value="Genomic_DNA"/>
</dbReference>
<dbReference type="EMBL" id="AP008211">
    <property type="protein sequence ID" value="BAF18302.2"/>
    <property type="molecule type" value="Genomic_DNA"/>
</dbReference>
<dbReference type="EMBL" id="AP014961">
    <property type="protein sequence ID" value="BAS95459.1"/>
    <property type="molecule type" value="Genomic_DNA"/>
</dbReference>
<dbReference type="EMBL" id="CM000142">
    <property type="protein sequence ID" value="EAZ35362.1"/>
    <property type="molecule type" value="Genomic_DNA"/>
</dbReference>
<dbReference type="EMBL" id="CM000142">
    <property type="protein sequence ID" value="EEE64777.1"/>
    <property type="molecule type" value="Genomic_DNA"/>
</dbReference>
<dbReference type="RefSeq" id="XP_015637722.1">
    <property type="nucleotide sequence ID" value="XM_015782236.1"/>
</dbReference>
<dbReference type="SMR" id="Q6F362"/>
<dbReference type="FunCoup" id="Q6F362">
    <property type="interactions" value="1681"/>
</dbReference>
<dbReference type="STRING" id="39947.Q6F362"/>
<dbReference type="PaxDb" id="39947-Q6F362"/>
<dbReference type="EnsemblPlants" id="Os05t0574300-00">
    <property type="protein sequence ID" value="Os05t0574300-00"/>
    <property type="gene ID" value="Os05g0574300"/>
</dbReference>
<dbReference type="Gramene" id="Os05t0574300-00">
    <property type="protein sequence ID" value="Os05t0574300-00"/>
    <property type="gene ID" value="Os05g0574300"/>
</dbReference>
<dbReference type="KEGG" id="dosa:Os05g0574300"/>
<dbReference type="eggNOG" id="KOG1744">
    <property type="taxonomic scope" value="Eukaryota"/>
</dbReference>
<dbReference type="HOGENOM" id="CLU_075666_1_0_1"/>
<dbReference type="InParanoid" id="Q6F362"/>
<dbReference type="OMA" id="NIYIYRV"/>
<dbReference type="Proteomes" id="UP000000763">
    <property type="component" value="Chromosome 5"/>
</dbReference>
<dbReference type="Proteomes" id="UP000007752">
    <property type="component" value="Chromosome 5"/>
</dbReference>
<dbReference type="Proteomes" id="UP000059680">
    <property type="component" value="Chromosome 5"/>
</dbReference>
<dbReference type="GO" id="GO:0000786">
    <property type="term" value="C:nucleosome"/>
    <property type="evidence" value="ECO:0007669"/>
    <property type="project" value="UniProtKB-KW"/>
</dbReference>
<dbReference type="GO" id="GO:0005634">
    <property type="term" value="C:nucleus"/>
    <property type="evidence" value="ECO:0007669"/>
    <property type="project" value="UniProtKB-SubCell"/>
</dbReference>
<dbReference type="GO" id="GO:0003677">
    <property type="term" value="F:DNA binding"/>
    <property type="evidence" value="ECO:0000318"/>
    <property type="project" value="GO_Central"/>
</dbReference>
<dbReference type="GO" id="GO:0046982">
    <property type="term" value="F:protein heterodimerization activity"/>
    <property type="evidence" value="ECO:0007669"/>
    <property type="project" value="InterPro"/>
</dbReference>
<dbReference type="GO" id="GO:0030527">
    <property type="term" value="F:structural constituent of chromatin"/>
    <property type="evidence" value="ECO:0007669"/>
    <property type="project" value="InterPro"/>
</dbReference>
<dbReference type="CDD" id="cd22910">
    <property type="entry name" value="HFD_H2B"/>
    <property type="match status" value="1"/>
</dbReference>
<dbReference type="FunFam" id="1.10.20.10:FF:000014">
    <property type="entry name" value="Histone H2B"/>
    <property type="match status" value="1"/>
</dbReference>
<dbReference type="Gene3D" id="1.10.20.10">
    <property type="entry name" value="Histone, subunit A"/>
    <property type="match status" value="1"/>
</dbReference>
<dbReference type="InterPro" id="IPR009072">
    <property type="entry name" value="Histone-fold"/>
</dbReference>
<dbReference type="InterPro" id="IPR007125">
    <property type="entry name" value="Histone_H2A/H2B/H3"/>
</dbReference>
<dbReference type="InterPro" id="IPR000558">
    <property type="entry name" value="Histone_H2B"/>
</dbReference>
<dbReference type="InterPro" id="IPR055333">
    <property type="entry name" value="HISTONE_H2B_site"/>
</dbReference>
<dbReference type="PANTHER" id="PTHR23428">
    <property type="entry name" value="HISTONE H2B"/>
    <property type="match status" value="1"/>
</dbReference>
<dbReference type="Pfam" id="PF00125">
    <property type="entry name" value="Histone"/>
    <property type="match status" value="1"/>
</dbReference>
<dbReference type="PRINTS" id="PR00621">
    <property type="entry name" value="HISTONEH2B"/>
</dbReference>
<dbReference type="SMART" id="SM00427">
    <property type="entry name" value="H2B"/>
    <property type="match status" value="1"/>
</dbReference>
<dbReference type="SUPFAM" id="SSF47113">
    <property type="entry name" value="Histone-fold"/>
    <property type="match status" value="1"/>
</dbReference>
<dbReference type="PROSITE" id="PS00357">
    <property type="entry name" value="HISTONE_H2B"/>
    <property type="match status" value="1"/>
</dbReference>
<reference key="1">
    <citation type="journal article" date="2005" name="Mol. Genet. Genomics">
        <title>A fine physical map of the rice chromosome 5.</title>
        <authorList>
            <person name="Cheng C.-H."/>
            <person name="Chung M.C."/>
            <person name="Liu S.-M."/>
            <person name="Chen S.-K."/>
            <person name="Kao F.Y."/>
            <person name="Lin S.-J."/>
            <person name="Hsiao S.-H."/>
            <person name="Tseng I.C."/>
            <person name="Hsing Y.-I.C."/>
            <person name="Wu H.-P."/>
            <person name="Chen C.-S."/>
            <person name="Shaw J.-F."/>
            <person name="Wu J."/>
            <person name="Matsumoto T."/>
            <person name="Sasaki T."/>
            <person name="Chen H.-C."/>
            <person name="Chow T.-Y."/>
        </authorList>
    </citation>
    <scope>NUCLEOTIDE SEQUENCE [LARGE SCALE GENOMIC DNA]</scope>
    <source>
        <strain>cv. Nipponbare</strain>
    </source>
</reference>
<reference key="2">
    <citation type="journal article" date="2005" name="Nature">
        <title>The map-based sequence of the rice genome.</title>
        <authorList>
            <consortium name="International rice genome sequencing project (IRGSP)"/>
        </authorList>
    </citation>
    <scope>NUCLEOTIDE SEQUENCE [LARGE SCALE GENOMIC DNA]</scope>
    <source>
        <strain>cv. Nipponbare</strain>
    </source>
</reference>
<reference key="3">
    <citation type="journal article" date="2008" name="Nucleic Acids Res.">
        <title>The rice annotation project database (RAP-DB): 2008 update.</title>
        <authorList>
            <consortium name="The rice annotation project (RAP)"/>
        </authorList>
    </citation>
    <scope>GENOME REANNOTATION</scope>
    <source>
        <strain>cv. Nipponbare</strain>
    </source>
</reference>
<reference key="4">
    <citation type="journal article" date="2013" name="Rice">
        <title>Improvement of the Oryza sativa Nipponbare reference genome using next generation sequence and optical map data.</title>
        <authorList>
            <person name="Kawahara Y."/>
            <person name="de la Bastide M."/>
            <person name="Hamilton J.P."/>
            <person name="Kanamori H."/>
            <person name="McCombie W.R."/>
            <person name="Ouyang S."/>
            <person name="Schwartz D.C."/>
            <person name="Tanaka T."/>
            <person name="Wu J."/>
            <person name="Zhou S."/>
            <person name="Childs K.L."/>
            <person name="Davidson R.M."/>
            <person name="Lin H."/>
            <person name="Quesada-Ocampo L."/>
            <person name="Vaillancourt B."/>
            <person name="Sakai H."/>
            <person name="Lee S.S."/>
            <person name="Kim J."/>
            <person name="Numa H."/>
            <person name="Itoh T."/>
            <person name="Buell C.R."/>
            <person name="Matsumoto T."/>
        </authorList>
    </citation>
    <scope>GENOME REANNOTATION</scope>
    <source>
        <strain>cv. Nipponbare</strain>
    </source>
</reference>
<reference key="5">
    <citation type="journal article" date="2005" name="PLoS Biol.">
        <title>The genomes of Oryza sativa: a history of duplications.</title>
        <authorList>
            <person name="Yu J."/>
            <person name="Wang J."/>
            <person name="Lin W."/>
            <person name="Li S."/>
            <person name="Li H."/>
            <person name="Zhou J."/>
            <person name="Ni P."/>
            <person name="Dong W."/>
            <person name="Hu S."/>
            <person name="Zeng C."/>
            <person name="Zhang J."/>
            <person name="Zhang Y."/>
            <person name="Li R."/>
            <person name="Xu Z."/>
            <person name="Li S."/>
            <person name="Li X."/>
            <person name="Zheng H."/>
            <person name="Cong L."/>
            <person name="Lin L."/>
            <person name="Yin J."/>
            <person name="Geng J."/>
            <person name="Li G."/>
            <person name="Shi J."/>
            <person name="Liu J."/>
            <person name="Lv H."/>
            <person name="Li J."/>
            <person name="Wang J."/>
            <person name="Deng Y."/>
            <person name="Ran L."/>
            <person name="Shi X."/>
            <person name="Wang X."/>
            <person name="Wu Q."/>
            <person name="Li C."/>
            <person name="Ren X."/>
            <person name="Wang J."/>
            <person name="Wang X."/>
            <person name="Li D."/>
            <person name="Liu D."/>
            <person name="Zhang X."/>
            <person name="Ji Z."/>
            <person name="Zhao W."/>
            <person name="Sun Y."/>
            <person name="Zhang Z."/>
            <person name="Bao J."/>
            <person name="Han Y."/>
            <person name="Dong L."/>
            <person name="Ji J."/>
            <person name="Chen P."/>
            <person name="Wu S."/>
            <person name="Liu J."/>
            <person name="Xiao Y."/>
            <person name="Bu D."/>
            <person name="Tan J."/>
            <person name="Yang L."/>
            <person name="Ye C."/>
            <person name="Zhang J."/>
            <person name="Xu J."/>
            <person name="Zhou Y."/>
            <person name="Yu Y."/>
            <person name="Zhang B."/>
            <person name="Zhuang S."/>
            <person name="Wei H."/>
            <person name="Liu B."/>
            <person name="Lei M."/>
            <person name="Yu H."/>
            <person name="Li Y."/>
            <person name="Xu H."/>
            <person name="Wei S."/>
            <person name="He X."/>
            <person name="Fang L."/>
            <person name="Zhang Z."/>
            <person name="Zhang Y."/>
            <person name="Huang X."/>
            <person name="Su Z."/>
            <person name="Tong W."/>
            <person name="Li J."/>
            <person name="Tong Z."/>
            <person name="Li S."/>
            <person name="Ye J."/>
            <person name="Wang L."/>
            <person name="Fang L."/>
            <person name="Lei T."/>
            <person name="Chen C.-S."/>
            <person name="Chen H.-C."/>
            <person name="Xu Z."/>
            <person name="Li H."/>
            <person name="Huang H."/>
            <person name="Zhang F."/>
            <person name="Xu H."/>
            <person name="Li N."/>
            <person name="Zhao C."/>
            <person name="Li S."/>
            <person name="Dong L."/>
            <person name="Huang Y."/>
            <person name="Li L."/>
            <person name="Xi Y."/>
            <person name="Qi Q."/>
            <person name="Li W."/>
            <person name="Zhang B."/>
            <person name="Hu W."/>
            <person name="Zhang Y."/>
            <person name="Tian X."/>
            <person name="Jiao Y."/>
            <person name="Liang X."/>
            <person name="Jin J."/>
            <person name="Gao L."/>
            <person name="Zheng W."/>
            <person name="Hao B."/>
            <person name="Liu S.-M."/>
            <person name="Wang W."/>
            <person name="Yuan L."/>
            <person name="Cao M."/>
            <person name="McDermott J."/>
            <person name="Samudrala R."/>
            <person name="Wang J."/>
            <person name="Wong G.K.-S."/>
            <person name="Yang H."/>
        </authorList>
    </citation>
    <scope>NUCLEOTIDE SEQUENCE [LARGE SCALE GENOMIC DNA]</scope>
    <source>
        <strain>cv. Nipponbare</strain>
    </source>
</reference>
<comment type="function">
    <text>Core component of nucleosome. Nucleosomes wrap and compact DNA into chromatin, limiting DNA accessibility to the cellular machineries which require DNA as a template. Histones thereby play a central role in transcription regulation, DNA repair, DNA replication and chromosomal stability. DNA accessibility is regulated via a complex set of post-translational modifications of histones, also called histone code, and nucleosome remodeling.</text>
</comment>
<comment type="subunit">
    <text>The nucleosome is a histone octamer containing two molecules each of H2A, H2B, H3 and H4 assembled in one H3-H4 heterotetramer and two H2A-H2B heterodimers. The octamer wraps approximately 147 bp of DNA.</text>
</comment>
<comment type="subcellular location">
    <subcellularLocation>
        <location evidence="1">Nucleus</location>
    </subcellularLocation>
    <subcellularLocation>
        <location evidence="1">Chromosome</location>
    </subcellularLocation>
</comment>
<comment type="PTM">
    <text evidence="1">Can be acetylated to form H2BK6ac and H2BK33ac.</text>
</comment>
<comment type="PTM">
    <text evidence="1">Monoubiquitinated by BRE1 to form H2BK143ub1 and deubiquitinated by UBP26. Required for heterochromatic histone H3 di- and trimethylation at H3K4me. May give a specific tag for epigenetic transcriptional activation (By similarity).</text>
</comment>
<comment type="similarity">
    <text evidence="3">Belongs to the histone H2B family.</text>
</comment>
<comment type="caution">
    <text evidence="3">To ensure consistency between histone entries, we follow the 'Brno' nomenclature for histone modifications, with positions referring to those used in the literature for the 'closest' model organism. Due to slight variations in histone sequences between organisms and to the presence of initiator methionine in UniProtKB/Swiss-Prot sequences, the actual positions of modified amino acids in the sequence generally differ. In this entry the following conventions are used: H2BK6ac = acetylated Lys-7; H2BK33ac = acetylated Lys-35; H2BK143ub1 = monoubiquitinated Lys-148.</text>
</comment>